<feature type="chain" id="PRO_0000094413" description="Nuclear receptor coactivator 6">
    <location>
        <begin position="1"/>
        <end position="2063"/>
    </location>
</feature>
<feature type="region of interest" description="NCOA1-binding region">
    <location>
        <begin position="1"/>
        <end position="1310"/>
    </location>
</feature>
<feature type="region of interest" description="CREBBP-binding region">
    <location>
        <begin position="1"/>
        <end position="1057"/>
    </location>
</feature>
<feature type="region of interest" description="TBP/GTF2A-binding region">
    <location>
        <begin position="1"/>
        <end position="928"/>
    </location>
</feature>
<feature type="region of interest" description="Disordered" evidence="3">
    <location>
        <begin position="184"/>
        <end position="251"/>
    </location>
</feature>
<feature type="region of interest" description="Disordered" evidence="3">
    <location>
        <begin position="281"/>
        <end position="549"/>
    </location>
</feature>
<feature type="region of interest" description="NCOA6IP-binding region">
    <location>
        <begin position="773"/>
        <end position="927"/>
    </location>
</feature>
<feature type="region of interest" description="Disordered" evidence="3">
    <location>
        <begin position="789"/>
        <end position="811"/>
    </location>
</feature>
<feature type="region of interest" description="Disordered" evidence="3">
    <location>
        <begin position="899"/>
        <end position="1278"/>
    </location>
</feature>
<feature type="region of interest" description="Disordered" evidence="3">
    <location>
        <begin position="1310"/>
        <end position="1353"/>
    </location>
</feature>
<feature type="region of interest" description="Disordered" evidence="3">
    <location>
        <begin position="1448"/>
        <end position="1474"/>
    </location>
</feature>
<feature type="region of interest" description="EP300/CRSP3-binding region">
    <location>
        <begin position="1641"/>
        <end position="2063"/>
    </location>
</feature>
<feature type="region of interest" description="Disordered" evidence="3">
    <location>
        <begin position="1738"/>
        <end position="1820"/>
    </location>
</feature>
<feature type="region of interest" description="Disordered" evidence="3">
    <location>
        <begin position="1837"/>
        <end position="1908"/>
    </location>
</feature>
<feature type="region of interest" description="Disordered" evidence="3">
    <location>
        <begin position="1995"/>
        <end position="2063"/>
    </location>
</feature>
<feature type="short sequence motif" description="LXXLL motif 1">
    <location>
        <begin position="887"/>
        <end position="891"/>
    </location>
</feature>
<feature type="short sequence motif" description="LXXLL motif 2">
    <location>
        <begin position="1491"/>
        <end position="1495"/>
    </location>
</feature>
<feature type="compositionally biased region" description="Low complexity" evidence="3">
    <location>
        <begin position="281"/>
        <end position="300"/>
    </location>
</feature>
<feature type="compositionally biased region" description="Polar residues" evidence="3">
    <location>
        <begin position="353"/>
        <end position="368"/>
    </location>
</feature>
<feature type="compositionally biased region" description="Polar residues" evidence="3">
    <location>
        <begin position="379"/>
        <end position="406"/>
    </location>
</feature>
<feature type="compositionally biased region" description="Polar residues" evidence="3">
    <location>
        <begin position="417"/>
        <end position="453"/>
    </location>
</feature>
<feature type="compositionally biased region" description="Polar residues" evidence="3">
    <location>
        <begin position="462"/>
        <end position="502"/>
    </location>
</feature>
<feature type="compositionally biased region" description="Polar residues" evidence="3">
    <location>
        <begin position="522"/>
        <end position="549"/>
    </location>
</feature>
<feature type="compositionally biased region" description="Low complexity" evidence="3">
    <location>
        <begin position="903"/>
        <end position="912"/>
    </location>
</feature>
<feature type="compositionally biased region" description="Basic residues" evidence="3">
    <location>
        <begin position="913"/>
        <end position="925"/>
    </location>
</feature>
<feature type="compositionally biased region" description="Low complexity" evidence="3">
    <location>
        <begin position="982"/>
        <end position="992"/>
    </location>
</feature>
<feature type="compositionally biased region" description="Pro residues" evidence="3">
    <location>
        <begin position="995"/>
        <end position="1020"/>
    </location>
</feature>
<feature type="compositionally biased region" description="Low complexity" evidence="3">
    <location>
        <begin position="1021"/>
        <end position="1041"/>
    </location>
</feature>
<feature type="compositionally biased region" description="Polar residues" evidence="3">
    <location>
        <begin position="1063"/>
        <end position="1075"/>
    </location>
</feature>
<feature type="compositionally biased region" description="Polar residues" evidence="3">
    <location>
        <begin position="1104"/>
        <end position="1125"/>
    </location>
</feature>
<feature type="compositionally biased region" description="Polar residues" evidence="3">
    <location>
        <begin position="1173"/>
        <end position="1191"/>
    </location>
</feature>
<feature type="compositionally biased region" description="Polar residues" evidence="3">
    <location>
        <begin position="1202"/>
        <end position="1214"/>
    </location>
</feature>
<feature type="compositionally biased region" description="Pro residues" evidence="3">
    <location>
        <begin position="1219"/>
        <end position="1232"/>
    </location>
</feature>
<feature type="compositionally biased region" description="Polar residues" evidence="3">
    <location>
        <begin position="1310"/>
        <end position="1320"/>
    </location>
</feature>
<feature type="compositionally biased region" description="Low complexity" evidence="3">
    <location>
        <begin position="1322"/>
        <end position="1345"/>
    </location>
</feature>
<feature type="compositionally biased region" description="Low complexity" evidence="3">
    <location>
        <begin position="1750"/>
        <end position="1763"/>
    </location>
</feature>
<feature type="compositionally biased region" description="Polar residues" evidence="3">
    <location>
        <begin position="1773"/>
        <end position="1798"/>
    </location>
</feature>
<feature type="compositionally biased region" description="Low complexity" evidence="3">
    <location>
        <begin position="1799"/>
        <end position="1815"/>
    </location>
</feature>
<feature type="compositionally biased region" description="Basic and acidic residues" evidence="3">
    <location>
        <begin position="2002"/>
        <end position="2011"/>
    </location>
</feature>
<feature type="modified residue" description="Asymmetric dimethylarginine" evidence="20">
    <location>
        <position position="95"/>
    </location>
</feature>
<feature type="modified residue" description="Phosphoserine; by MAPK; in vitro" evidence="10">
    <location>
        <position position="884"/>
    </location>
</feature>
<feature type="modified residue" description="Asymmetric dimethylarginine" evidence="2">
    <location>
        <position position="1047"/>
    </location>
</feature>
<feature type="modified residue" description="Asymmetric dimethylarginine" evidence="2">
    <location>
        <position position="1058"/>
    </location>
</feature>
<feature type="modified residue" description="Asymmetric dimethylarginine" evidence="2">
    <location>
        <position position="1096"/>
    </location>
</feature>
<feature type="modified residue" description="N6-acetyllysine" evidence="2">
    <location>
        <position position="1819"/>
    </location>
</feature>
<feature type="modified residue" description="N6-acetyllysine" evidence="2">
    <location>
        <position position="1822"/>
    </location>
</feature>
<feature type="modified residue" description="Phosphoserine" evidence="19">
    <location>
        <position position="2018"/>
    </location>
</feature>
<feature type="sequence variant" id="VAR_027874" description="In dbSNP:rs6060031.">
    <original>P</original>
    <variation>L</variation>
    <location>
        <position position="512"/>
    </location>
</feature>
<feature type="sequence variant" id="VAR_027875" description="In dbSNP:rs17092079." evidence="4 5 6 7 17">
    <original>N</original>
    <variation>S</variation>
    <location>
        <position position="955"/>
    </location>
</feature>
<feature type="sequence variant" id="VAR_036551" description="In a breast cancer sample; somatic mutation." evidence="14">
    <original>P</original>
    <variation>S</variation>
    <location>
        <position position="1060"/>
    </location>
</feature>
<feature type="sequence variant" id="VAR_036552" description="In a breast cancer sample; somatic mutation." evidence="14">
    <original>S</original>
    <variation>R</variation>
    <location>
        <position position="1191"/>
    </location>
</feature>
<feature type="sequence variant" id="VAR_027876" description="In dbSNP:rs6060022.">
    <original>I</original>
    <variation>V</variation>
    <location>
        <position position="1995"/>
    </location>
</feature>
<feature type="mutagenesis site" description="Reduced binding to THRB, RXRA, ESR2 and ESR1." evidence="10">
    <original>TSPLLVNLLQSD</original>
    <variation>ENPLLVNLLQFI</variation>
    <location>
        <begin position="883"/>
        <end position="894"/>
    </location>
</feature>
<feature type="mutagenesis site" description="Reduced binding to THRB, RXRA, ESR2 and ESR1." evidence="10">
    <original>TSPLLVNLLQSD</original>
    <variation>NLPLLVNLLQHT</variation>
    <location>
        <begin position="883"/>
        <end position="894"/>
    </location>
</feature>
<feature type="mutagenesis site" description="Reduced binding to THRB, RXRA, ESR2 and ESR1." evidence="10">
    <original>TSPLLVNLLQSD</original>
    <variation>VNPLLVNLLQFI</variation>
    <location>
        <begin position="883"/>
        <end position="894"/>
    </location>
</feature>
<feature type="mutagenesis site" description="Strong increase in binding to THRB, RXRA and ESR2, but dramatic decrease in binding to ESR1.">
    <original>TS</original>
    <variation>SY</variation>
    <location>
        <begin position="883"/>
        <end position="884"/>
    </location>
</feature>
<feature type="mutagenesis site" description="Reduced binding to THRB, RXRA, ESR2 and ESR1.">
    <original>SPLLVNLLQSD</original>
    <variation>NPLLVNLLQLL</variation>
    <location>
        <begin position="884"/>
        <end position="894"/>
    </location>
</feature>
<evidence type="ECO:0000250" key="1"/>
<evidence type="ECO:0000250" key="2">
    <source>
        <dbReference type="UniProtKB" id="Q9JL19"/>
    </source>
</evidence>
<evidence type="ECO:0000256" key="3">
    <source>
        <dbReference type="SAM" id="MobiDB-lite"/>
    </source>
</evidence>
<evidence type="ECO:0000269" key="4">
    <source>
    </source>
</evidence>
<evidence type="ECO:0000269" key="5">
    <source>
    </source>
</evidence>
<evidence type="ECO:0000269" key="6">
    <source>
    </source>
</evidence>
<evidence type="ECO:0000269" key="7">
    <source>
    </source>
</evidence>
<evidence type="ECO:0000269" key="8">
    <source>
    </source>
</evidence>
<evidence type="ECO:0000269" key="9">
    <source>
    </source>
</evidence>
<evidence type="ECO:0000269" key="10">
    <source>
    </source>
</evidence>
<evidence type="ECO:0000269" key="11">
    <source>
    </source>
</evidence>
<evidence type="ECO:0000269" key="12">
    <source>
    </source>
</evidence>
<evidence type="ECO:0000269" key="13">
    <source>
    </source>
</evidence>
<evidence type="ECO:0000269" key="14">
    <source>
    </source>
</evidence>
<evidence type="ECO:0000269" key="15">
    <source>
    </source>
</evidence>
<evidence type="ECO:0000269" key="16">
    <source>
    </source>
</evidence>
<evidence type="ECO:0000269" key="17">
    <source>
    </source>
</evidence>
<evidence type="ECO:0000305" key="18"/>
<evidence type="ECO:0007744" key="19">
    <source>
    </source>
</evidence>
<evidence type="ECO:0007744" key="20">
    <source>
    </source>
</evidence>
<sequence>MVLDDLPNLEDIYTSLCSSTMEDSEMDFDSGLEDDDTKSDSILEDSTIFVAFKGNIDDKDFKWKLDAILKNVPNLLHMESSKLKVQKVEPWNSVRVTFNIPREAAERLRILAQSNNQQLRDLGILSVQIEGEGAINLALAQNRSQDVRMNGPMGAGNSVRMEAGFPMASGPGIIRMNNPATVMIPPGGNVSSSMMAPGPNPELQPRTPRPASQSDAMDPLLSGLHIQQQSHPSGSLAPPHHPMQPVSVNRQMNPANFPQLQQQQQQQQQQQQQQQQQQQQQQQQQLQARPPQQHQQQQPQGIRPQFTAPTQVPVPPGWNQLPSGALQPPPAQGSLGTMTANQGWKKAPLPGPMQQQLQARPSLATVQTPSHPPPPYPFGSQQASQAHTNFPQMSNPGQFTAPQMKSLQGGPSRVPTPLQQPHLTNKSPASSPSSFQQGSPASSPTVNQTQQQMGPRPPQNNPLPQGFQQPVSSPGRNPMVQQGNVPPNFMVMQQQPPNQGPQSLHPGLGGMPKRLPPGFSAGQANPNFMQGQVPSTTATTPGNSGAPQLQANQNVQHAGGQGAGPPQNQMQVSHGPPNMMQPSLMGIHGNMNNQQAGTSGVPQVNLSNMQGQPQQGPPSQLMGMHQQIVPSQGQMVQQQGTLNPQNPMILSRAQLMPQGQMMVNPPSQNLGPSPQRMTPPKQMLSQQGPQMMAPHNQMMGPQGQVLLQQNPMIEQIMTNQMQGNKQQFNTQNQSNVMPGPAQIMRGPTPNMQGNMVQFTGQMSGQMLPQQGPVNNSPSQVMGIQGQVLRPPGPSPHMAQQHGDPATTANNDVSLSQMMPDVSIQQTNMVPPHVQAMQGNSASGNHFSGHGMSFNAPFSGAPNGNQMSCGQNPGFPVNKDVTLTSPLLVNLLQSDISAGHFGVNNKQNNTNANKPKKKKPPRKKKNSQQDLNTPDTRPAGLEEADQPPLPGEQGINLDNSGPKLPEFSNRPPGYPSQPVEQRPLQQMPPQLMQHVAPPPQPPQQQPQPQLPQQQQPPPPSQPQSQQQQQQQQQMMMMLMMQQDPKSVRLPVSQNVHPPRGPLNPDSQRMPMQQSGSVPVMVSLQGPASVPPSPDKQRMPMPVNTPLGSNSRKMVYQESPQNPSSSPLAEMASLPEASGSEAPSVPGGPNNMPSHVVLPQNQLMMTGPKPGPSPLSATQGATPQQPPVNSLPSSHGHHFPNVAAPTQTSRPKTPNRASPRPYYPQTPNNRPPSTEPSEISLSPERLNASIAGLFPPQINIPLPPRPNLNRGFDQQGLNPTTLKAIGQAPSNLTMNPSNFATPQTHKLDSVVVNSGKQSNSGATKRASPSNSRRSSPGSSRKTTPSPGRQNSKAPKLTLASQTNAALLQNVELPRNVLVSPTPLANPPVPGSFPNNSGLNPQNSTVSVAAVGGVVEDNKESLNVPQDSDCQNSQSRKEQVNIELKAVPAQEVKMVVPEDQSKKDGQPSDPNKLPSVEENKNLVSPAMREAPTSLSQLLDNSGAPNVTIKPPGLTDLEVTPPVVSGEDLKKASVIPTLQDLSSSKEPSNSLNLPHSNELCSSLVHPELSEVSSNVAPSIPPVMSRPVSSSSISTPLPPNQITVFVTSNPITTSANTSAALPTHLQSALMSTVVTMPNAGSKVMVSEGQSAAQSNARPQFITPVFINSSSIIQVMKGSQPSTIPAAPLTTNSGLMPPSVAVVGPLHIPQNIKFSSAPVPPNALSSSPAPNIQTGRPLVLSSRATPVQLPSPPCTSSPVVPSHPPVQQVKELNPDEASPQVNTSADQNTLPSSQSTTMVSPLLTNSPGSSGNRRSPVSSSKGKGKVDKIGQILLTKACKKVTGSLEKGEEQYGADGETEGQGLDTTAPGLMGTEQLSTELDSKTPTPPAPTLLKMTSSPVGPGTASAGPSLPGGALPTSVRSIVTTLVPSELISAVPTTKSNHGGIASESLAGGLVEEKVGSHPELLPSIAPSQNLVSKETSTTALQASVARPELEVNAAIVSGQSSEPKEIVEKSKIPGRRNSRTEEPTVASESVENGHRKRSSRPASASSSTKDITSAVQSKRRKSK</sequence>
<reference key="1">
    <citation type="journal article" date="1999" name="J. Biol. Chem.">
        <title>A nuclear factor ASC-2, as a cancer-amplified transcriptional coactivator essential for ligand-dependent transactivation by nuclear receptors in vivo.</title>
        <authorList>
            <person name="Lee S.-K."/>
            <person name="Anzick S.L."/>
            <person name="Choi J.-E."/>
            <person name="Bubendorf L."/>
            <person name="Guan X.-Y."/>
            <person name="Jung Y.-K."/>
            <person name="Kallioniemi O.-P."/>
            <person name="Kononen J."/>
            <person name="Trent J.M."/>
            <person name="Azorsa D."/>
            <person name="Jhun B.-H."/>
            <person name="Cheong J.H."/>
            <person name="Lee Y.C."/>
            <person name="Meltzer P.S."/>
            <person name="Lee J.W."/>
        </authorList>
    </citation>
    <scope>NUCLEOTIDE SEQUENCE [MRNA]</scope>
    <scope>INTERACTION WITH CREBBP; NCOA1; GTF2A; TBP; RXRA; ESR1; RARA AND THRA</scope>
    <scope>VARIANT SER-955</scope>
</reference>
<reference key="2">
    <citation type="journal article" date="2000" name="Mol. Cell. Biol.">
        <title>A new family of nuclear receptor coregulators that integrates nuclear receptor signaling through CBP.</title>
        <authorList>
            <person name="Mahajan M.A."/>
            <person name="Samuels H.H."/>
        </authorList>
    </citation>
    <scope>NUCLEOTIDE SEQUENCE [MRNA]</scope>
    <scope>HOMODIMERIZATION</scope>
    <scope>INTERACTION WITH CREBBP; RXRA; ESR1; NR3C1; RARA; VDR AND THRA</scope>
    <scope>VARIANT SER-955</scope>
</reference>
<reference key="3">
    <citation type="journal article" date="2000" name="J. Biol. Chem.">
        <title>Cloning and characterization of RAP250, a nuclear receptor coactivator.</title>
        <authorList>
            <person name="Caira F."/>
            <person name="Antonson P."/>
            <person name="Pelto-Huikko M."/>
            <person name="Treuter E."/>
            <person name="Gustafsson J.-A."/>
        </authorList>
    </citation>
    <scope>NUCLEOTIDE SEQUENCE [MRNA]</scope>
    <scope>INTERACTION WITH PPARA; PPARG; ESR1; ESR2 AND THR</scope>
    <scope>VARIANT SER-955</scope>
    <source>
        <tissue>Testis</tissue>
    </source>
</reference>
<reference key="4">
    <citation type="journal article" date="2000" name="Proc. Natl. Acad. Sci. U.S.A.">
        <title>Thyroid hormone receptor-binding protein, an LXXLL motif-containing protein, functions as a general coactivator.</title>
        <authorList>
            <person name="Ko L."/>
            <person name="Cardona G.R."/>
            <person name="Chin W.W."/>
        </authorList>
    </citation>
    <scope>NUCLEOTIDE SEQUENCE [MRNA]</scope>
    <scope>PHOSPHORYLATION BY PRKDC</scope>
    <scope>INTERACTION WITH THR; RAR; EP300 AND CRSP3</scope>
    <scope>VARIANT SER-955</scope>
    <source>
        <tissue>Lymphocyte</tissue>
    </source>
</reference>
<reference key="5">
    <citation type="journal article" date="1996" name="DNA Res.">
        <title>Prediction of the coding sequences of unidentified human genes. V. The coding sequences of 40 new genes (KIAA0161-KIAA0200) deduced by analysis of cDNA clones from human cell line KG-1.</title>
        <authorList>
            <person name="Nagase T."/>
            <person name="Seki N."/>
            <person name="Ishikawa K."/>
            <person name="Tanaka A."/>
            <person name="Nomura N."/>
        </authorList>
    </citation>
    <scope>NUCLEOTIDE SEQUENCE [LARGE SCALE MRNA]</scope>
    <scope>VARIANT SER-955</scope>
    <source>
        <tissue>Bone marrow</tissue>
    </source>
</reference>
<reference key="6">
    <citation type="journal article" date="2002" name="DNA Res.">
        <title>Construction of expression-ready cDNA clones for KIAA genes: manual curation of 330 KIAA cDNA clones.</title>
        <authorList>
            <person name="Nakajima D."/>
            <person name="Okazaki N."/>
            <person name="Yamakawa H."/>
            <person name="Kikuno R."/>
            <person name="Ohara O."/>
            <person name="Nagase T."/>
        </authorList>
    </citation>
    <scope>SEQUENCE REVISION</scope>
</reference>
<reference key="7">
    <citation type="journal article" date="2001" name="Nature">
        <title>The DNA sequence and comparative analysis of human chromosome 20.</title>
        <authorList>
            <person name="Deloukas P."/>
            <person name="Matthews L.H."/>
            <person name="Ashurst J.L."/>
            <person name="Burton J."/>
            <person name="Gilbert J.G.R."/>
            <person name="Jones M."/>
            <person name="Stavrides G."/>
            <person name="Almeida J.P."/>
            <person name="Babbage A.K."/>
            <person name="Bagguley C.L."/>
            <person name="Bailey J."/>
            <person name="Barlow K.F."/>
            <person name="Bates K.N."/>
            <person name="Beard L.M."/>
            <person name="Beare D.M."/>
            <person name="Beasley O.P."/>
            <person name="Bird C.P."/>
            <person name="Blakey S.E."/>
            <person name="Bridgeman A.M."/>
            <person name="Brown A.J."/>
            <person name="Buck D."/>
            <person name="Burrill W.D."/>
            <person name="Butler A.P."/>
            <person name="Carder C."/>
            <person name="Carter N.P."/>
            <person name="Chapman J.C."/>
            <person name="Clamp M."/>
            <person name="Clark G."/>
            <person name="Clark L.N."/>
            <person name="Clark S.Y."/>
            <person name="Clee C.M."/>
            <person name="Clegg S."/>
            <person name="Cobley V.E."/>
            <person name="Collier R.E."/>
            <person name="Connor R.E."/>
            <person name="Corby N.R."/>
            <person name="Coulson A."/>
            <person name="Coville G.J."/>
            <person name="Deadman R."/>
            <person name="Dhami P.D."/>
            <person name="Dunn M."/>
            <person name="Ellington A.G."/>
            <person name="Frankland J.A."/>
            <person name="Fraser A."/>
            <person name="French L."/>
            <person name="Garner P."/>
            <person name="Grafham D.V."/>
            <person name="Griffiths C."/>
            <person name="Griffiths M.N.D."/>
            <person name="Gwilliam R."/>
            <person name="Hall R.E."/>
            <person name="Hammond S."/>
            <person name="Harley J.L."/>
            <person name="Heath P.D."/>
            <person name="Ho S."/>
            <person name="Holden J.L."/>
            <person name="Howden P.J."/>
            <person name="Huckle E."/>
            <person name="Hunt A.R."/>
            <person name="Hunt S.E."/>
            <person name="Jekosch K."/>
            <person name="Johnson C.M."/>
            <person name="Johnson D."/>
            <person name="Kay M.P."/>
            <person name="Kimberley A.M."/>
            <person name="King A."/>
            <person name="Knights A."/>
            <person name="Laird G.K."/>
            <person name="Lawlor S."/>
            <person name="Lehvaeslaiho M.H."/>
            <person name="Leversha M.A."/>
            <person name="Lloyd C."/>
            <person name="Lloyd D.M."/>
            <person name="Lovell J.D."/>
            <person name="Marsh V.L."/>
            <person name="Martin S.L."/>
            <person name="McConnachie L.J."/>
            <person name="McLay K."/>
            <person name="McMurray A.A."/>
            <person name="Milne S.A."/>
            <person name="Mistry D."/>
            <person name="Moore M.J.F."/>
            <person name="Mullikin J.C."/>
            <person name="Nickerson T."/>
            <person name="Oliver K."/>
            <person name="Parker A."/>
            <person name="Patel R."/>
            <person name="Pearce T.A.V."/>
            <person name="Peck A.I."/>
            <person name="Phillimore B.J.C.T."/>
            <person name="Prathalingam S.R."/>
            <person name="Plumb R.W."/>
            <person name="Ramsay H."/>
            <person name="Rice C.M."/>
            <person name="Ross M.T."/>
            <person name="Scott C.E."/>
            <person name="Sehra H.K."/>
            <person name="Shownkeen R."/>
            <person name="Sims S."/>
            <person name="Skuce C.D."/>
            <person name="Smith M.L."/>
            <person name="Soderlund C."/>
            <person name="Steward C.A."/>
            <person name="Sulston J.E."/>
            <person name="Swann R.M."/>
            <person name="Sycamore N."/>
            <person name="Taylor R."/>
            <person name="Tee L."/>
            <person name="Thomas D.W."/>
            <person name="Thorpe A."/>
            <person name="Tracey A."/>
            <person name="Tromans A.C."/>
            <person name="Vaudin M."/>
            <person name="Wall M."/>
            <person name="Wallis J.M."/>
            <person name="Whitehead S.L."/>
            <person name="Whittaker P."/>
            <person name="Willey D.L."/>
            <person name="Williams L."/>
            <person name="Williams S.A."/>
            <person name="Wilming L."/>
            <person name="Wray P.W."/>
            <person name="Hubbard T."/>
            <person name="Durbin R.M."/>
            <person name="Bentley D.R."/>
            <person name="Beck S."/>
            <person name="Rogers J."/>
        </authorList>
    </citation>
    <scope>NUCLEOTIDE SEQUENCE [LARGE SCALE GENOMIC DNA]</scope>
</reference>
<reference key="8">
    <citation type="submission" date="2005-09" db="EMBL/GenBank/DDBJ databases">
        <authorList>
            <person name="Mural R.J."/>
            <person name="Istrail S."/>
            <person name="Sutton G.G."/>
            <person name="Florea L."/>
            <person name="Halpern A.L."/>
            <person name="Mobarry C.M."/>
            <person name="Lippert R."/>
            <person name="Walenz B."/>
            <person name="Shatkay H."/>
            <person name="Dew I."/>
            <person name="Miller J.R."/>
            <person name="Flanigan M.J."/>
            <person name="Edwards N.J."/>
            <person name="Bolanos R."/>
            <person name="Fasulo D."/>
            <person name="Halldorsson B.V."/>
            <person name="Hannenhalli S."/>
            <person name="Turner R."/>
            <person name="Yooseph S."/>
            <person name="Lu F."/>
            <person name="Nusskern D.R."/>
            <person name="Shue B.C."/>
            <person name="Zheng X.H."/>
            <person name="Zhong F."/>
            <person name="Delcher A.L."/>
            <person name="Huson D.H."/>
            <person name="Kravitz S.A."/>
            <person name="Mouchard L."/>
            <person name="Reinert K."/>
            <person name="Remington K.A."/>
            <person name="Clark A.G."/>
            <person name="Waterman M.S."/>
            <person name="Eichler E.E."/>
            <person name="Adams M.D."/>
            <person name="Hunkapiller M.W."/>
            <person name="Myers E.W."/>
            <person name="Venter J.C."/>
        </authorList>
    </citation>
    <scope>NUCLEOTIDE SEQUENCE [LARGE SCALE GENOMIC DNA]</scope>
</reference>
<reference key="9">
    <citation type="journal article" date="2004" name="Genome Res.">
        <title>The status, quality, and expansion of the NIH full-length cDNA project: the Mammalian Gene Collection (MGC).</title>
        <authorList>
            <consortium name="The MGC Project Team"/>
        </authorList>
    </citation>
    <scope>NUCLEOTIDE SEQUENCE [LARGE SCALE MRNA]</scope>
    <source>
        <tissue>Cerebellum</tissue>
    </source>
</reference>
<reference key="10">
    <citation type="journal article" date="2001" name="Proc. Natl. Acad. Sci. U.S.A.">
        <title>Cloning and characterization of PIMT, a protein with a methyltransferase domain, which interacts with and enhances nuclear receptor coactivator PRIP function.</title>
        <authorList>
            <person name="Zhu Y.-J."/>
            <person name="Qi C."/>
            <person name="Cao W.-Q."/>
            <person name="Yeldandi A.V."/>
            <person name="Rao M.S."/>
            <person name="Reddy J.K."/>
        </authorList>
    </citation>
    <scope>INTERACTION WITH NCOA6IP</scope>
</reference>
<reference key="11">
    <citation type="journal article" date="2001" name="J. Biol. Chem.">
        <title>Identification and characterization of RRM-containing coactivator activator (CoAA) as TRBP-interacting protein, and its splice variant as a coactivator modulator (CoAM).</title>
        <authorList>
            <person name="Iwasaki T."/>
            <person name="Chin W.W."/>
            <person name="Ko L."/>
        </authorList>
    </citation>
    <scope>INTERACTION WITH RBM14</scope>
</reference>
<reference key="12">
    <citation type="journal article" date="2002" name="J. Biol. Chem.">
        <title>Identification of protein arginine methyltransferase 2 as a coactivator for estrogen receptor alpha.</title>
        <authorList>
            <person name="Qi C."/>
            <person name="Chang J."/>
            <person name="Zhu Y."/>
            <person name="Yeldandi A.V."/>
            <person name="Rao S.M."/>
            <person name="Zhu Y.-J."/>
        </authorList>
    </citation>
    <scope>INTERACTION WITH PRMT2</scope>
</reference>
<reference key="13">
    <citation type="journal article" date="2002" name="Mol. Cell. Biol.">
        <title>NRC-interacting factor 1 is a novel cotransducer that interacts with and regulates the activity of the nuclear hormone receptor coactivator NRC.</title>
        <authorList>
            <person name="Mahajan M.A."/>
            <person name="Murray A."/>
            <person name="Samuels H.H."/>
        </authorList>
    </citation>
    <scope>INTERACTION WITH ZNF335</scope>
</reference>
<reference key="14">
    <citation type="journal article" date="2003" name="Mol. Cell. Biol.">
        <title>Activating signal cointegrator 2 belongs to a novel steady-state complex that contains a subset of trithorax group proteins.</title>
        <authorList>
            <person name="Goo Y.-H."/>
            <person name="Sohn Y.C."/>
            <person name="Kim D.-H."/>
            <person name="Kim S.-W."/>
            <person name="Kang M.-J."/>
            <person name="Jung D.-J."/>
            <person name="Kwak E."/>
            <person name="Barlev N.A."/>
            <person name="Berger S.L."/>
            <person name="Chow V.T."/>
            <person name="Roeder R.G."/>
            <person name="Azorsa D.O."/>
            <person name="Meltzer P.S."/>
            <person name="Suh P.-G."/>
            <person name="Song E.J."/>
            <person name="Lee K.-J."/>
            <person name="Lee Y.C."/>
            <person name="Lee J.W."/>
        </authorList>
    </citation>
    <scope>IDENTIFICATION IN THE MLL2/3 (ASCOM) COMPLEX</scope>
    <source>
        <tissue>Cervix carcinoma</tissue>
    </source>
</reference>
<reference key="15">
    <citation type="journal article" date="2002" name="Mol. Endocrinol.">
        <title>Ser-884 adjacent to the LXXLL motif of coactivator TRBP defines selectivity for ERs and TRs.</title>
        <authorList>
            <person name="Ko L."/>
            <person name="Cardona G.R."/>
            <person name="Iwasaki T."/>
            <person name="Bramlett K.S."/>
            <person name="Burris T.P."/>
            <person name="Chin W.W."/>
        </authorList>
    </citation>
    <scope>MUTAGENESIS OF 883-THR--GLU-894</scope>
    <scope>PHOSPHORYLATION AT SER-884</scope>
</reference>
<reference key="16">
    <citation type="journal article" date="2006" name="Proc. Natl. Acad. Sci. U.S.A.">
        <title>Coactivator as a target gene specificity determinant for histone H3 lysine 4 methyltransferases.</title>
        <authorList>
            <person name="Lee S."/>
            <person name="Lee D.K."/>
            <person name="Dou Y."/>
            <person name="Lee J."/>
            <person name="Lee B."/>
            <person name="Kwak E."/>
            <person name="Kong Y.Y."/>
            <person name="Lee S.K."/>
            <person name="Roeder R.G."/>
            <person name="Lee J.W."/>
        </authorList>
    </citation>
    <scope>IDENTIFICATION IN THE MLL2/3 (ASCOM) COMPLEX</scope>
</reference>
<reference key="17">
    <citation type="journal article" date="2007" name="J. Biol. Chem.">
        <title>PTIP associates with MLL3- and MLL4-containing histone H3 lysine 4 methyltransferase complex.</title>
        <authorList>
            <person name="Cho Y.-W."/>
            <person name="Hong T."/>
            <person name="Hong S."/>
            <person name="Guo H."/>
            <person name="Yu H."/>
            <person name="Kim D."/>
            <person name="Guszczynski T."/>
            <person name="Dressler G.R."/>
            <person name="Copeland T.D."/>
            <person name="Kalkum M."/>
            <person name="Ge K."/>
        </authorList>
    </citation>
    <scope>IDENTIFICATION BY MASS SPECTROMETRY</scope>
    <scope>IDENTIFICATION IN THE MLL2/3 COMPLEX</scope>
</reference>
<reference key="18">
    <citation type="journal article" date="2013" name="J. Proteome Res.">
        <title>Toward a comprehensive characterization of a human cancer cell phosphoproteome.</title>
        <authorList>
            <person name="Zhou H."/>
            <person name="Di Palma S."/>
            <person name="Preisinger C."/>
            <person name="Peng M."/>
            <person name="Polat A.N."/>
            <person name="Heck A.J."/>
            <person name="Mohammed S."/>
        </authorList>
    </citation>
    <scope>PHOSPHORYLATION [LARGE SCALE ANALYSIS] AT SER-2018</scope>
    <scope>IDENTIFICATION BY MASS SPECTROMETRY [LARGE SCALE ANALYSIS]</scope>
    <source>
        <tissue>Cervix carcinoma</tissue>
        <tissue>Erythroleukemia</tissue>
    </source>
</reference>
<reference key="19">
    <citation type="journal article" date="2014" name="J. Proteomics">
        <title>An enzyme assisted RP-RPLC approach for in-depth analysis of human liver phosphoproteome.</title>
        <authorList>
            <person name="Bian Y."/>
            <person name="Song C."/>
            <person name="Cheng K."/>
            <person name="Dong M."/>
            <person name="Wang F."/>
            <person name="Huang J."/>
            <person name="Sun D."/>
            <person name="Wang L."/>
            <person name="Ye M."/>
            <person name="Zou H."/>
        </authorList>
    </citation>
    <scope>IDENTIFICATION BY MASS SPECTROMETRY [LARGE SCALE ANALYSIS]</scope>
    <source>
        <tissue>Liver</tissue>
    </source>
</reference>
<reference key="20">
    <citation type="journal article" date="2014" name="Mol. Cell. Proteomics">
        <title>Immunoaffinity enrichment and mass spectrometry analysis of protein methylation.</title>
        <authorList>
            <person name="Guo A."/>
            <person name="Gu H."/>
            <person name="Zhou J."/>
            <person name="Mulhern D."/>
            <person name="Wang Y."/>
            <person name="Lee K.A."/>
            <person name="Yang V."/>
            <person name="Aguiar M."/>
            <person name="Kornhauser J."/>
            <person name="Jia X."/>
            <person name="Ren J."/>
            <person name="Beausoleil S.A."/>
            <person name="Silva J.C."/>
            <person name="Vemulapalli V."/>
            <person name="Bedford M.T."/>
            <person name="Comb M.J."/>
        </authorList>
    </citation>
    <scope>METHYLATION [LARGE SCALE ANALYSIS] AT ARG-95</scope>
    <scope>IDENTIFICATION BY MASS SPECTROMETRY [LARGE SCALE ANALYSIS]</scope>
    <source>
        <tissue>Colon carcinoma</tissue>
    </source>
</reference>
<reference key="21">
    <citation type="journal article" date="2006" name="Science">
        <title>The consensus coding sequences of human breast and colorectal cancers.</title>
        <authorList>
            <person name="Sjoeblom T."/>
            <person name="Jones S."/>
            <person name="Wood L.D."/>
            <person name="Parsons D.W."/>
            <person name="Lin J."/>
            <person name="Barber T.D."/>
            <person name="Mandelker D."/>
            <person name="Leary R.J."/>
            <person name="Ptak J."/>
            <person name="Silliman N."/>
            <person name="Szabo S."/>
            <person name="Buckhaults P."/>
            <person name="Farrell C."/>
            <person name="Meeh P."/>
            <person name="Markowitz S.D."/>
            <person name="Willis J."/>
            <person name="Dawson D."/>
            <person name="Willson J.K.V."/>
            <person name="Gazdar A.F."/>
            <person name="Hartigan J."/>
            <person name="Wu L."/>
            <person name="Liu C."/>
            <person name="Parmigiani G."/>
            <person name="Park B.H."/>
            <person name="Bachman K.E."/>
            <person name="Papadopoulos N."/>
            <person name="Vogelstein B."/>
            <person name="Kinzler K.W."/>
            <person name="Velculescu V.E."/>
        </authorList>
    </citation>
    <scope>VARIANTS [LARGE SCALE ANALYSIS] SER-1060 AND ARG-1191</scope>
</reference>
<keyword id="KW-0007">Acetylation</keyword>
<keyword id="KW-0010">Activator</keyword>
<keyword id="KW-0488">Methylation</keyword>
<keyword id="KW-0539">Nucleus</keyword>
<keyword id="KW-0597">Phosphoprotein</keyword>
<keyword id="KW-1267">Proteomics identification</keyword>
<keyword id="KW-1185">Reference proteome</keyword>
<keyword id="KW-0677">Repeat</keyword>
<keyword id="KW-0804">Transcription</keyword>
<keyword id="KW-0805">Transcription regulation</keyword>
<organism>
    <name type="scientific">Homo sapiens</name>
    <name type="common">Human</name>
    <dbReference type="NCBI Taxonomy" id="9606"/>
    <lineage>
        <taxon>Eukaryota</taxon>
        <taxon>Metazoa</taxon>
        <taxon>Chordata</taxon>
        <taxon>Craniata</taxon>
        <taxon>Vertebrata</taxon>
        <taxon>Euteleostomi</taxon>
        <taxon>Mammalia</taxon>
        <taxon>Eutheria</taxon>
        <taxon>Euarchontoglires</taxon>
        <taxon>Primates</taxon>
        <taxon>Haplorrhini</taxon>
        <taxon>Catarrhini</taxon>
        <taxon>Hominidae</taxon>
        <taxon>Homo</taxon>
    </lineage>
</organism>
<accession>Q14686</accession>
<accession>A6NLF1</accession>
<accession>B2RMN5</accession>
<accession>E1P5P7</accession>
<accession>Q9NTZ9</accession>
<accession>Q9UH74</accession>
<accession>Q9UK86</accession>
<comment type="function">
    <text>Nuclear receptor coactivator that directly binds nuclear receptors and stimulates the transcriptional activities in a hormone-dependent fashion. Coactivates expression in an agonist- and AF2-dependent manner. Involved in the coactivation of different nuclear receptors, such as for steroids (GR and ERs), retinoids (RARs and RXRs), thyroid hormone (TRs), vitamin D3 (VDR) and prostanoids (PPARs). Probably functions as a general coactivator, rather than just a nuclear receptor coactivator. May also be involved in the coactivation of the NF-kappa-B pathway. May coactivate expression via a remodeling of chromatin and its interaction with histone acetyltransferase proteins.</text>
</comment>
<comment type="subunit">
    <text evidence="1 4 5 6 7 8 9 11 12 13 15 16">Monomer and homodimer. Interacts with RBM39 (By similarity). Interacts in vitro with the basal transcription factors GTF2A and TBP, suggesting an autonomous transactivation function. Interacts with NCOA1, CRSP3, RBM14, the histone acetyltransferases EP300 and CREBBP, and with the methyltransferases NCOA6IP and PRMT2/HRMT1L1. Component of the MLL2/3 complex (also named ASCOM complex), at least composed of KMT2D/MLL2 or KMT2C/MLL3, ASH2L, RBBP5, WDR5, NCOA6, DPY30, KDM6A, PAXIP1/PTIP, PAGR1 and alpha- and beta-tubulin. Interacts with ZNF335; may enhance ligand-dependent transcriptional activation by nuclear hormone receptors.</text>
</comment>
<comment type="interaction">
    <interactant intactId="EBI-78670">
        <id>Q14686</id>
    </interactant>
    <interactant intactId="EBI-608057">
        <id>P10275</id>
        <label>AR</label>
    </interactant>
    <organismsDiffer>false</organismsDiffer>
    <experiments>3</experiments>
</comment>
<comment type="interaction">
    <interactant intactId="EBI-78670">
        <id>Q14686</id>
    </interactant>
    <interactant intactId="EBI-540797">
        <id>Q9UBL3</id>
        <label>ASH2L</label>
    </interactant>
    <organismsDiffer>false</organismsDiffer>
    <experiments>15</experiments>
</comment>
<comment type="interaction">
    <interactant intactId="EBI-78670">
        <id>Q14686</id>
    </interactant>
    <interactant intactId="EBI-81215">
        <id>Q92793</id>
        <label>CREBBP</label>
    </interactant>
    <organismsDiffer>false</organismsDiffer>
    <experiments>2</experiments>
</comment>
<comment type="interaction">
    <interactant intactId="EBI-78670">
        <id>Q14686</id>
    </interactant>
    <interactant intactId="EBI-765774">
        <id>Q9UMN6</id>
        <label>KMT2B</label>
    </interactant>
    <organismsDiffer>false</organismsDiffer>
    <experiments>5</experiments>
</comment>
<comment type="interaction">
    <interactant intactId="EBI-78670">
        <id>Q14686</id>
    </interactant>
    <interactant intactId="EBI-1042997">
        <id>Q8NEZ4</id>
        <label>KMT2C</label>
    </interactant>
    <organismsDiffer>false</organismsDiffer>
    <experiments>7</experiments>
</comment>
<comment type="interaction">
    <interactant intactId="EBI-78670">
        <id>Q14686</id>
    </interactant>
    <interactant intactId="EBI-491274">
        <id>P06400</id>
        <label>RB1</label>
    </interactant>
    <organismsDiffer>false</organismsDiffer>
    <experiments>3</experiments>
</comment>
<comment type="interaction">
    <interactant intactId="EBI-78670">
        <id>Q14686</id>
    </interactant>
    <interactant intactId="EBI-396540">
        <id>Q12888</id>
        <label>TP53BP1</label>
    </interactant>
    <organismsDiffer>false</organismsDiffer>
    <experiments>3</experiments>
</comment>
<comment type="interaction">
    <interactant intactId="EBI-78670">
        <id>Q14686</id>
    </interactant>
    <interactant intactId="EBI-8022649">
        <id>Q12888-1</id>
        <label>TP53BP1</label>
    </interactant>
    <organismsDiffer>false</organismsDiffer>
    <experiments>3</experiments>
</comment>
<comment type="interaction">
    <interactant intactId="EBI-78670">
        <id>Q14686</id>
    </interactant>
    <interactant intactId="EBI-540834">
        <id>P61964</id>
        <label>WDR5</label>
    </interactant>
    <organismsDiffer>false</organismsDiffer>
    <experiments>10</experiments>
</comment>
<comment type="subcellular location">
    <subcellularLocation>
        <location>Nucleus</location>
    </subcellularLocation>
</comment>
<comment type="tissue specificity">
    <text>Ubiquitous. Highly expressed in brain, prostate, testis and ovary; weakly expressed in lung, thymus and small intestine.</text>
</comment>
<comment type="domain">
    <text>Contains two Leu-Xaa-Xaa-Leu-Leu (LXXLL) motifs. Only motif 1 is essential for the association with nuclear receptors, while adjacent Ser-884 displays selectivity for nuclear receptors.</text>
</comment>
<comment type="PTM">
    <text>Phosphorylated by PRKDC.</text>
</comment>
<comment type="PTM">
    <text evidence="6 10">Phosphorylation on Ser-884 leads to a strong decrease in binding to ESR1 and ESR2.</text>
</comment>
<comment type="miscellaneous">
    <text>Frequently amplified or overexpressed in colon, breast and lung cancers.</text>
</comment>
<comment type="sequence caution" evidence="18">
    <conflict type="frameshift">
        <sequence resource="EMBL-CDS" id="AAF16403"/>
    </conflict>
</comment>
<comment type="sequence caution" evidence="18">
    <conflict type="erroneous initiation">
        <sequence resource="EMBL-CDS" id="BAA11498"/>
    </conflict>
    <text>Extended N-terminus.</text>
</comment>
<proteinExistence type="evidence at protein level"/>
<protein>
    <recommendedName>
        <fullName>Nuclear receptor coactivator 6</fullName>
    </recommendedName>
    <alternativeName>
        <fullName>Activating signal cointegrator 2</fullName>
        <shortName>ASC-2</shortName>
    </alternativeName>
    <alternativeName>
        <fullName>Amplified in breast cancer protein 3</fullName>
    </alternativeName>
    <alternativeName>
        <fullName>Cancer-amplified transcriptional coactivator ASC-2</fullName>
    </alternativeName>
    <alternativeName>
        <fullName>Nuclear receptor coactivator RAP250</fullName>
        <shortName>NRC RAP250</shortName>
    </alternativeName>
    <alternativeName>
        <fullName>Nuclear receptor-activating protein, 250 kDa</fullName>
    </alternativeName>
    <alternativeName>
        <fullName>Peroxisome proliferator-activated receptor-interacting protein</fullName>
        <shortName>PPAR-interacting protein</shortName>
        <shortName>PRIP</shortName>
    </alternativeName>
    <alternativeName>
        <fullName>Thyroid hormone receptor-binding protein</fullName>
    </alternativeName>
</protein>
<dbReference type="EMBL" id="AF177388">
    <property type="protein sequence ID" value="AAF13595.1"/>
    <property type="molecule type" value="mRNA"/>
</dbReference>
<dbReference type="EMBL" id="AF208227">
    <property type="protein sequence ID" value="AAF16403.1"/>
    <property type="status" value="ALT_FRAME"/>
    <property type="molecule type" value="mRNA"/>
</dbReference>
<dbReference type="EMBL" id="AF245115">
    <property type="protein sequence ID" value="AAF78480.1"/>
    <property type="molecule type" value="mRNA"/>
</dbReference>
<dbReference type="EMBL" id="AF128458">
    <property type="protein sequence ID" value="AAF37003.1"/>
    <property type="molecule type" value="mRNA"/>
</dbReference>
<dbReference type="EMBL" id="AF171667">
    <property type="protein sequence ID" value="AAF71829.1"/>
    <property type="molecule type" value="mRNA"/>
</dbReference>
<dbReference type="EMBL" id="D80003">
    <property type="protein sequence ID" value="BAA11498.2"/>
    <property type="status" value="ALT_INIT"/>
    <property type="molecule type" value="mRNA"/>
</dbReference>
<dbReference type="EMBL" id="AL109824">
    <property type="status" value="NOT_ANNOTATED_CDS"/>
    <property type="molecule type" value="Genomic_DNA"/>
</dbReference>
<dbReference type="EMBL" id="CH471077">
    <property type="protein sequence ID" value="EAW76254.1"/>
    <property type="molecule type" value="Genomic_DNA"/>
</dbReference>
<dbReference type="EMBL" id="CH471077">
    <property type="protein sequence ID" value="EAW76255.1"/>
    <property type="molecule type" value="Genomic_DNA"/>
</dbReference>
<dbReference type="EMBL" id="BC136272">
    <property type="protein sequence ID" value="AAI36273.1"/>
    <property type="molecule type" value="mRNA"/>
</dbReference>
<dbReference type="CCDS" id="CCDS13241.1"/>
<dbReference type="RefSeq" id="NP_001229468.1">
    <property type="nucleotide sequence ID" value="NM_001242539.2"/>
</dbReference>
<dbReference type="RefSeq" id="NP_001305169.1">
    <property type="nucleotide sequence ID" value="NM_001318240.1"/>
</dbReference>
<dbReference type="RefSeq" id="NP_054790.2">
    <property type="nucleotide sequence ID" value="NM_014071.4"/>
</dbReference>
<dbReference type="RefSeq" id="XP_047296005.1">
    <property type="nucleotide sequence ID" value="XM_047440049.1"/>
</dbReference>
<dbReference type="RefSeq" id="XP_054179226.1">
    <property type="nucleotide sequence ID" value="XM_054323251.1"/>
</dbReference>
<dbReference type="BioGRID" id="116691">
    <property type="interactions" value="141"/>
</dbReference>
<dbReference type="ComplexPortal" id="CPX-7091">
    <property type="entry name" value="Histone-lysine N-methyltransferase complex, KMT2C variant"/>
</dbReference>
<dbReference type="ComplexPortal" id="CPX-7104">
    <property type="entry name" value="Histone-lysine N-methyltransferase complex, KMT2D variant"/>
</dbReference>
<dbReference type="CORUM" id="Q14686"/>
<dbReference type="DIP" id="DIP-30934N"/>
<dbReference type="FunCoup" id="Q14686">
    <property type="interactions" value="2383"/>
</dbReference>
<dbReference type="IntAct" id="Q14686">
    <property type="interactions" value="61"/>
</dbReference>
<dbReference type="MINT" id="Q14686"/>
<dbReference type="STRING" id="9606.ENSP00000363929"/>
<dbReference type="GlyCosmos" id="Q14686">
    <property type="glycosylation" value="11 sites, 2 glycans"/>
</dbReference>
<dbReference type="GlyGen" id="Q14686">
    <property type="glycosylation" value="24 sites, 2 O-linked glycans (23 sites)"/>
</dbReference>
<dbReference type="iPTMnet" id="Q14686"/>
<dbReference type="PhosphoSitePlus" id="Q14686"/>
<dbReference type="BioMuta" id="NCOA6"/>
<dbReference type="DMDM" id="116242672"/>
<dbReference type="jPOST" id="Q14686"/>
<dbReference type="MassIVE" id="Q14686"/>
<dbReference type="PaxDb" id="9606-ENSP00000363929"/>
<dbReference type="PeptideAtlas" id="Q14686"/>
<dbReference type="ProteomicsDB" id="60120"/>
<dbReference type="Pumba" id="Q14686"/>
<dbReference type="Antibodypedia" id="1325">
    <property type="antibodies" value="96 antibodies from 22 providers"/>
</dbReference>
<dbReference type="DNASU" id="23054"/>
<dbReference type="Ensembl" id="ENST00000359003.7">
    <property type="protein sequence ID" value="ENSP00000351894.2"/>
    <property type="gene ID" value="ENSG00000198646.14"/>
</dbReference>
<dbReference type="Ensembl" id="ENST00000374796.6">
    <property type="protein sequence ID" value="ENSP00000363929.2"/>
    <property type="gene ID" value="ENSG00000198646.14"/>
</dbReference>
<dbReference type="GeneID" id="23054"/>
<dbReference type="KEGG" id="hsa:23054"/>
<dbReference type="MANE-Select" id="ENST00000359003.7">
    <property type="protein sequence ID" value="ENSP00000351894.2"/>
    <property type="RefSeq nucleotide sequence ID" value="NM_014071.5"/>
    <property type="RefSeq protein sequence ID" value="NP_054790.2"/>
</dbReference>
<dbReference type="UCSC" id="uc002xav.3">
    <property type="organism name" value="human"/>
</dbReference>
<dbReference type="AGR" id="HGNC:15936"/>
<dbReference type="CTD" id="23054"/>
<dbReference type="DisGeNET" id="23054"/>
<dbReference type="GeneCards" id="NCOA6"/>
<dbReference type="HGNC" id="HGNC:15936">
    <property type="gene designation" value="NCOA6"/>
</dbReference>
<dbReference type="HPA" id="ENSG00000198646">
    <property type="expression patterns" value="Low tissue specificity"/>
</dbReference>
<dbReference type="MIM" id="605299">
    <property type="type" value="gene"/>
</dbReference>
<dbReference type="neXtProt" id="NX_Q14686"/>
<dbReference type="OpenTargets" id="ENSG00000198646"/>
<dbReference type="PharmGKB" id="PA31475"/>
<dbReference type="VEuPathDB" id="HostDB:ENSG00000198646"/>
<dbReference type="eggNOG" id="ENOG502QQMS">
    <property type="taxonomic scope" value="Eukaryota"/>
</dbReference>
<dbReference type="GeneTree" id="ENSGT00730000111114"/>
<dbReference type="HOGENOM" id="CLU_001959_0_0_1"/>
<dbReference type="InParanoid" id="Q14686"/>
<dbReference type="OMA" id="RDYPFES"/>
<dbReference type="OrthoDB" id="5967287at2759"/>
<dbReference type="PAN-GO" id="Q14686">
    <property type="GO annotations" value="4 GO annotations based on evolutionary models"/>
</dbReference>
<dbReference type="PhylomeDB" id="Q14686"/>
<dbReference type="TreeFam" id="TF332639"/>
<dbReference type="PathwayCommons" id="Q14686"/>
<dbReference type="Reactome" id="R-HSA-1368082">
    <property type="pathway name" value="RORA activates gene expression"/>
</dbReference>
<dbReference type="Reactome" id="R-HSA-1368108">
    <property type="pathway name" value="BMAL1:CLOCK,NPAS2 activates circadian gene expression"/>
</dbReference>
<dbReference type="Reactome" id="R-HSA-1989781">
    <property type="pathway name" value="PPARA activates gene expression"/>
</dbReference>
<dbReference type="Reactome" id="R-HSA-2151201">
    <property type="pathway name" value="Transcriptional activation of mitochondrial biogenesis"/>
</dbReference>
<dbReference type="Reactome" id="R-HSA-2426168">
    <property type="pathway name" value="Activation of gene expression by SREBF (SREBP)"/>
</dbReference>
<dbReference type="Reactome" id="R-HSA-381340">
    <property type="pathway name" value="Transcriptional regulation of white adipocyte differentiation"/>
</dbReference>
<dbReference type="Reactome" id="R-HSA-400206">
    <property type="pathway name" value="Regulation of lipid metabolism by PPARalpha"/>
</dbReference>
<dbReference type="Reactome" id="R-HSA-400253">
    <property type="pathway name" value="Circadian Clock"/>
</dbReference>
<dbReference type="Reactome" id="R-HSA-5617472">
    <property type="pathway name" value="Activation of anterior HOX genes in hindbrain development during early embryogenesis"/>
</dbReference>
<dbReference type="Reactome" id="R-HSA-9707564">
    <property type="pathway name" value="Cytoprotection by HMOX1"/>
</dbReference>
<dbReference type="Reactome" id="R-HSA-9707616">
    <property type="pathway name" value="Heme signaling"/>
</dbReference>
<dbReference type="Reactome" id="R-HSA-9772755">
    <property type="pathway name" value="Formation of WDR5-containing histone-modifying complexes"/>
</dbReference>
<dbReference type="Reactome" id="R-HSA-9818564">
    <property type="pathway name" value="Epigenetic regulation of gene expression by MLL3 and MLL4 complexes"/>
</dbReference>
<dbReference type="Reactome" id="R-HSA-9841922">
    <property type="pathway name" value="MLL4 and MLL3 complexes regulate expression of PPARG target genes in adipogenesis and hepatic steatosis"/>
</dbReference>
<dbReference type="SignaLink" id="Q14686"/>
<dbReference type="SIGNOR" id="Q14686"/>
<dbReference type="BioGRID-ORCS" id="23054">
    <property type="hits" value="48 hits in 1165 CRISPR screens"/>
</dbReference>
<dbReference type="ChiTaRS" id="NCOA6">
    <property type="organism name" value="human"/>
</dbReference>
<dbReference type="GeneWiki" id="NCOA6"/>
<dbReference type="GenomeRNAi" id="23054"/>
<dbReference type="Pharos" id="Q14686">
    <property type="development level" value="Tbio"/>
</dbReference>
<dbReference type="PRO" id="PR:Q14686"/>
<dbReference type="Proteomes" id="UP000005640">
    <property type="component" value="Chromosome 20"/>
</dbReference>
<dbReference type="RNAct" id="Q14686">
    <property type="molecule type" value="protein"/>
</dbReference>
<dbReference type="Bgee" id="ENSG00000198646">
    <property type="expression patterns" value="Expressed in secondary oocyte and 208 other cell types or tissues"/>
</dbReference>
<dbReference type="ExpressionAtlas" id="Q14686">
    <property type="expression patterns" value="baseline and differential"/>
</dbReference>
<dbReference type="GO" id="GO:0005829">
    <property type="term" value="C:cytosol"/>
    <property type="evidence" value="ECO:0000314"/>
    <property type="project" value="HPA"/>
</dbReference>
<dbReference type="GO" id="GO:0035097">
    <property type="term" value="C:histone methyltransferase complex"/>
    <property type="evidence" value="ECO:0000314"/>
    <property type="project" value="MGI"/>
</dbReference>
<dbReference type="GO" id="GO:0043231">
    <property type="term" value="C:intracellular membrane-bounded organelle"/>
    <property type="evidence" value="ECO:0000314"/>
    <property type="project" value="HPA"/>
</dbReference>
<dbReference type="GO" id="GO:0044666">
    <property type="term" value="C:MLL3/4 complex"/>
    <property type="evidence" value="ECO:0000353"/>
    <property type="project" value="ComplexPortal"/>
</dbReference>
<dbReference type="GO" id="GO:0005654">
    <property type="term" value="C:nucleoplasm"/>
    <property type="evidence" value="ECO:0000314"/>
    <property type="project" value="HPA"/>
</dbReference>
<dbReference type="GO" id="GO:0005634">
    <property type="term" value="C:nucleus"/>
    <property type="evidence" value="ECO:0000314"/>
    <property type="project" value="UniProtKB"/>
</dbReference>
<dbReference type="GO" id="GO:0005667">
    <property type="term" value="C:transcription regulator complex"/>
    <property type="evidence" value="ECO:0000318"/>
    <property type="project" value="GO_Central"/>
</dbReference>
<dbReference type="GO" id="GO:0003682">
    <property type="term" value="F:chromatin binding"/>
    <property type="evidence" value="ECO:0000250"/>
    <property type="project" value="UniProtKB"/>
</dbReference>
<dbReference type="GO" id="GO:0019899">
    <property type="term" value="F:enzyme binding"/>
    <property type="evidence" value="ECO:0000353"/>
    <property type="project" value="UniProtKB"/>
</dbReference>
<dbReference type="GO" id="GO:0030331">
    <property type="term" value="F:nuclear estrogen receptor binding"/>
    <property type="evidence" value="ECO:0000304"/>
    <property type="project" value="UniProtKB"/>
</dbReference>
<dbReference type="GO" id="GO:0046965">
    <property type="term" value="F:nuclear retinoid X receptor binding"/>
    <property type="evidence" value="ECO:0000304"/>
    <property type="project" value="UniProtKB"/>
</dbReference>
<dbReference type="GO" id="GO:0046966">
    <property type="term" value="F:nuclear thyroid hormone receptor binding"/>
    <property type="evidence" value="ECO:0000314"/>
    <property type="project" value="UniProtKB"/>
</dbReference>
<dbReference type="GO" id="GO:0003713">
    <property type="term" value="F:transcription coactivator activity"/>
    <property type="evidence" value="ECO:0000314"/>
    <property type="project" value="UniProtKB"/>
</dbReference>
<dbReference type="GO" id="GO:0007420">
    <property type="term" value="P:brain development"/>
    <property type="evidence" value="ECO:0000250"/>
    <property type="project" value="UniProtKB"/>
</dbReference>
<dbReference type="GO" id="GO:0006974">
    <property type="term" value="P:DNA damage response"/>
    <property type="evidence" value="ECO:0000314"/>
    <property type="project" value="MGI"/>
</dbReference>
<dbReference type="GO" id="GO:0006352">
    <property type="term" value="P:DNA-templated transcription initiation"/>
    <property type="evidence" value="ECO:0000314"/>
    <property type="project" value="UniProtKB"/>
</dbReference>
<dbReference type="GO" id="GO:0007507">
    <property type="term" value="P:heart development"/>
    <property type="evidence" value="ECO:0000250"/>
    <property type="project" value="UniProtKB"/>
</dbReference>
<dbReference type="GO" id="GO:0030099">
    <property type="term" value="P:myeloid cell differentiation"/>
    <property type="evidence" value="ECO:0000314"/>
    <property type="project" value="UniProtKB"/>
</dbReference>
<dbReference type="GO" id="GO:0045893">
    <property type="term" value="P:positive regulation of DNA-templated transcription"/>
    <property type="evidence" value="ECO:0000304"/>
    <property type="project" value="UniProtKB"/>
</dbReference>
<dbReference type="GO" id="GO:0045944">
    <property type="term" value="P:positive regulation of transcription by RNA polymerase II"/>
    <property type="evidence" value="ECO:0000314"/>
    <property type="project" value="UniProtKB"/>
</dbReference>
<dbReference type="GO" id="GO:0009725">
    <property type="term" value="P:response to hormone"/>
    <property type="evidence" value="ECO:0000304"/>
    <property type="project" value="UniProtKB"/>
</dbReference>
<dbReference type="InterPro" id="IPR026638">
    <property type="entry name" value="NCOA6"/>
</dbReference>
<dbReference type="InterPro" id="IPR032715">
    <property type="entry name" value="NCOA6_TRADD-N"/>
</dbReference>
<dbReference type="PANTHER" id="PTHR15690">
    <property type="entry name" value="NUCLEAR RECEPTOR COACTIVATOR 6"/>
    <property type="match status" value="1"/>
</dbReference>
<dbReference type="PANTHER" id="PTHR15690:SF0">
    <property type="entry name" value="NUCLEAR RECEPTOR COACTIVATOR 6"/>
    <property type="match status" value="1"/>
</dbReference>
<dbReference type="Pfam" id="PF13820">
    <property type="entry name" value="NCOA6_TRADD-N"/>
    <property type="match status" value="1"/>
</dbReference>
<gene>
    <name type="primary">NCOA6</name>
    <name type="synonym">AIB3</name>
    <name type="synonym">KIAA0181</name>
    <name type="synonym">RAP250</name>
    <name type="synonym">TRBP</name>
</gene>
<name>NCOA6_HUMAN</name>